<protein>
    <recommendedName>
        <fullName evidence="3">Toxin GhoT</fullName>
    </recommendedName>
</protein>
<proteinExistence type="inferred from homology"/>
<sequence length="57" mass="6555">MALFSKILIFYVIGVNISFVIIWFISHEKTHIRLLSAFLVGITWPMSLPVALLFSLF</sequence>
<dbReference type="EMBL" id="AE014075">
    <property type="protein sequence ID" value="AAN83558.1"/>
    <property type="molecule type" value="Genomic_DNA"/>
</dbReference>
<dbReference type="RefSeq" id="WP_001173343.1">
    <property type="nucleotide sequence ID" value="NZ_CP051263.1"/>
</dbReference>
<dbReference type="STRING" id="199310.c5136"/>
<dbReference type="GeneID" id="93777703"/>
<dbReference type="KEGG" id="ecc:c5136"/>
<dbReference type="HOGENOM" id="CLU_189012_0_0_6"/>
<dbReference type="BioCyc" id="ECOL199310:C5136-MONOMER"/>
<dbReference type="Proteomes" id="UP000001410">
    <property type="component" value="Chromosome"/>
</dbReference>
<dbReference type="GO" id="GO:0005886">
    <property type="term" value="C:plasma membrane"/>
    <property type="evidence" value="ECO:0007669"/>
    <property type="project" value="UniProtKB-SubCell"/>
</dbReference>
<dbReference type="InterPro" id="IPR019689">
    <property type="entry name" value="Toxin_GhoT/OrtT"/>
</dbReference>
<dbReference type="Pfam" id="PF10753">
    <property type="entry name" value="Toxin_GhoT_OrtT"/>
    <property type="match status" value="1"/>
</dbReference>
<evidence type="ECO:0000250" key="1">
    <source>
        <dbReference type="UniProtKB" id="P64646"/>
    </source>
</evidence>
<evidence type="ECO:0000255" key="2"/>
<evidence type="ECO:0000305" key="3"/>
<feature type="chain" id="PRO_0000169737" description="Toxin GhoT">
    <location>
        <begin position="1"/>
        <end position="57"/>
    </location>
</feature>
<feature type="transmembrane region" description="Helical" evidence="2">
    <location>
        <begin position="7"/>
        <end position="27"/>
    </location>
</feature>
<feature type="transmembrane region" description="Helical" evidence="2">
    <location>
        <begin position="37"/>
        <end position="57"/>
    </location>
</feature>
<keyword id="KW-0997">Cell inner membrane</keyword>
<keyword id="KW-1003">Cell membrane</keyword>
<keyword id="KW-0472">Membrane</keyword>
<keyword id="KW-1185">Reference proteome</keyword>
<keyword id="KW-1277">Toxin-antitoxin system</keyword>
<keyword id="KW-0812">Transmembrane</keyword>
<keyword id="KW-1133">Transmembrane helix</keyword>
<reference key="1">
    <citation type="journal article" date="2002" name="Proc. Natl. Acad. Sci. U.S.A.">
        <title>Extensive mosaic structure revealed by the complete genome sequence of uropathogenic Escherichia coli.</title>
        <authorList>
            <person name="Welch R.A."/>
            <person name="Burland V."/>
            <person name="Plunkett G. III"/>
            <person name="Redford P."/>
            <person name="Roesch P."/>
            <person name="Rasko D."/>
            <person name="Buckles E.L."/>
            <person name="Liou S.-R."/>
            <person name="Boutin A."/>
            <person name="Hackett J."/>
            <person name="Stroud D."/>
            <person name="Mayhew G.F."/>
            <person name="Rose D.J."/>
            <person name="Zhou S."/>
            <person name="Schwartz D.C."/>
            <person name="Perna N.T."/>
            <person name="Mobley H.L.T."/>
            <person name="Donnenberg M.S."/>
            <person name="Blattner F.R."/>
        </authorList>
    </citation>
    <scope>NUCLEOTIDE SEQUENCE [LARGE SCALE GENOMIC DNA]</scope>
    <source>
        <strain>CFT073 / ATCC 700928 / UPEC</strain>
    </source>
</reference>
<name>GHOT_ECOL6</name>
<organism>
    <name type="scientific">Escherichia coli O6:H1 (strain CFT073 / ATCC 700928 / UPEC)</name>
    <dbReference type="NCBI Taxonomy" id="199310"/>
    <lineage>
        <taxon>Bacteria</taxon>
        <taxon>Pseudomonadati</taxon>
        <taxon>Pseudomonadota</taxon>
        <taxon>Gammaproteobacteria</taxon>
        <taxon>Enterobacterales</taxon>
        <taxon>Enterobacteriaceae</taxon>
        <taxon>Escherichia</taxon>
    </lineage>
</organism>
<gene>
    <name evidence="3" type="primary">ghoT</name>
    <name type="ordered locus">c5136</name>
</gene>
<comment type="function">
    <text evidence="1">Toxic component of a type V toxin-antitoxin (TA) system. Causes membrane damage when induced by MqsR, slowing cell growth and leading to the formation of dormant persister cells; involved with GhoS, its antitoxin, in reducing cell growth during antibacterial stress. Its toxic effects are neutralized by GhoS, which digests ghoT transcripts in a sequence-specific manner.</text>
</comment>
<comment type="subcellular location">
    <subcellularLocation>
        <location evidence="1">Cell inner membrane</location>
        <topology evidence="3">Multi-pass membrane protein</topology>
    </subcellularLocation>
</comment>
<comment type="similarity">
    <text evidence="3">Belongs to the GhoT/OrtT toxin family.</text>
</comment>
<accession>P64647</accession>
<accession>P58038</accession>